<geneLocation type="chloroplast"/>
<sequence length="143" mass="15624">MTKAIPKIGSRRKVRIGLRRNARFSLRKSARRITKGVIHVQASFNNTIITVTDPQGRVVFWSSAGTCGFKSSRKASPYAGQRTAVDAIRTVGLQRAEVMVKGAGSGRDAALRAIAKSGVRLSCIRDVTPMPHNGCRPPKKRRL</sequence>
<accession>Q6ENE1</accession>
<evidence type="ECO:0000255" key="1">
    <source>
        <dbReference type="HAMAP-Rule" id="MF_01310"/>
    </source>
</evidence>
<evidence type="ECO:0000305" key="2"/>
<evidence type="ECO:0000312" key="3">
    <source>
        <dbReference type="Proteomes" id="UP000006591"/>
    </source>
</evidence>
<comment type="subunit">
    <text evidence="1">Part of the 30S ribosomal subunit.</text>
</comment>
<comment type="subcellular location">
    <subcellularLocation>
        <location>Plastid</location>
        <location>Chloroplast</location>
    </subcellularLocation>
</comment>
<comment type="similarity">
    <text evidence="1">Belongs to the universal ribosomal protein uS11 family.</text>
</comment>
<protein>
    <recommendedName>
        <fullName evidence="1">Small ribosomal subunit protein uS11c</fullName>
    </recommendedName>
    <alternativeName>
        <fullName evidence="2">30S ribosomal protein S11, chloroplastic</fullName>
    </alternativeName>
</protein>
<name>RR11_ORYNI</name>
<organism>
    <name type="scientific">Oryza nivara</name>
    <name type="common">Indian wild rice</name>
    <name type="synonym">Oryza sativa f. spontanea</name>
    <dbReference type="NCBI Taxonomy" id="4536"/>
    <lineage>
        <taxon>Eukaryota</taxon>
        <taxon>Viridiplantae</taxon>
        <taxon>Streptophyta</taxon>
        <taxon>Embryophyta</taxon>
        <taxon>Tracheophyta</taxon>
        <taxon>Spermatophyta</taxon>
        <taxon>Magnoliopsida</taxon>
        <taxon>Liliopsida</taxon>
        <taxon>Poales</taxon>
        <taxon>Poaceae</taxon>
        <taxon>BOP clade</taxon>
        <taxon>Oryzoideae</taxon>
        <taxon>Oryzeae</taxon>
        <taxon>Oryzinae</taxon>
        <taxon>Oryza</taxon>
    </lineage>
</organism>
<keyword id="KW-0150">Chloroplast</keyword>
<keyword id="KW-0934">Plastid</keyword>
<keyword id="KW-1185">Reference proteome</keyword>
<keyword id="KW-0687">Ribonucleoprotein</keyword>
<keyword id="KW-0689">Ribosomal protein</keyword>
<keyword id="KW-0694">RNA-binding</keyword>
<keyword id="KW-0699">rRNA-binding</keyword>
<dbReference type="EMBL" id="AP006728">
    <property type="protein sequence ID" value="BAD26811.1"/>
    <property type="molecule type" value="Genomic_DNA"/>
</dbReference>
<dbReference type="RefSeq" id="YP_052782.1">
    <property type="nucleotide sequence ID" value="NC_005973.1"/>
</dbReference>
<dbReference type="SMR" id="Q6ENE1"/>
<dbReference type="STRING" id="4536.Q6ENE1"/>
<dbReference type="GeneID" id="2885931"/>
<dbReference type="Proteomes" id="UP000006591">
    <property type="component" value="Chloroplast"/>
</dbReference>
<dbReference type="GO" id="GO:0009507">
    <property type="term" value="C:chloroplast"/>
    <property type="evidence" value="ECO:0007669"/>
    <property type="project" value="UniProtKB-SubCell"/>
</dbReference>
<dbReference type="GO" id="GO:0009536">
    <property type="term" value="C:plastid"/>
    <property type="evidence" value="ECO:0000305"/>
    <property type="project" value="Gramene"/>
</dbReference>
<dbReference type="GO" id="GO:1990904">
    <property type="term" value="C:ribonucleoprotein complex"/>
    <property type="evidence" value="ECO:0007669"/>
    <property type="project" value="UniProtKB-KW"/>
</dbReference>
<dbReference type="GO" id="GO:0005840">
    <property type="term" value="C:ribosome"/>
    <property type="evidence" value="ECO:0007669"/>
    <property type="project" value="UniProtKB-KW"/>
</dbReference>
<dbReference type="GO" id="GO:0019843">
    <property type="term" value="F:rRNA binding"/>
    <property type="evidence" value="ECO:0007669"/>
    <property type="project" value="UniProtKB-UniRule"/>
</dbReference>
<dbReference type="GO" id="GO:0003735">
    <property type="term" value="F:structural constituent of ribosome"/>
    <property type="evidence" value="ECO:0007669"/>
    <property type="project" value="InterPro"/>
</dbReference>
<dbReference type="GO" id="GO:0006412">
    <property type="term" value="P:translation"/>
    <property type="evidence" value="ECO:0007669"/>
    <property type="project" value="UniProtKB-UniRule"/>
</dbReference>
<dbReference type="FunFam" id="3.30.420.80:FF:000003">
    <property type="entry name" value="30S ribosomal protein S11, chloroplastic"/>
    <property type="match status" value="1"/>
</dbReference>
<dbReference type="Gene3D" id="3.30.420.80">
    <property type="entry name" value="Ribosomal protein S11"/>
    <property type="match status" value="1"/>
</dbReference>
<dbReference type="HAMAP" id="MF_01310">
    <property type="entry name" value="Ribosomal_uS11"/>
    <property type="match status" value="1"/>
</dbReference>
<dbReference type="InterPro" id="IPR001971">
    <property type="entry name" value="Ribosomal_uS11"/>
</dbReference>
<dbReference type="InterPro" id="IPR018102">
    <property type="entry name" value="Ribosomal_uS11_CS"/>
</dbReference>
<dbReference type="InterPro" id="IPR036967">
    <property type="entry name" value="Ribosomal_uS11_sf"/>
</dbReference>
<dbReference type="NCBIfam" id="NF003698">
    <property type="entry name" value="PRK05309.1"/>
    <property type="match status" value="1"/>
</dbReference>
<dbReference type="PANTHER" id="PTHR11759">
    <property type="entry name" value="40S RIBOSOMAL PROTEIN S14/30S RIBOSOMAL PROTEIN S11"/>
    <property type="match status" value="1"/>
</dbReference>
<dbReference type="Pfam" id="PF00411">
    <property type="entry name" value="Ribosomal_S11"/>
    <property type="match status" value="1"/>
</dbReference>
<dbReference type="PIRSF" id="PIRSF002131">
    <property type="entry name" value="Ribosomal_S11"/>
    <property type="match status" value="1"/>
</dbReference>
<dbReference type="SUPFAM" id="SSF53137">
    <property type="entry name" value="Translational machinery components"/>
    <property type="match status" value="1"/>
</dbReference>
<dbReference type="PROSITE" id="PS00054">
    <property type="entry name" value="RIBOSOMAL_S11"/>
    <property type="match status" value="1"/>
</dbReference>
<gene>
    <name evidence="1" type="primary">rps11</name>
</gene>
<reference key="1">
    <citation type="journal article" date="2004" name="Gene">
        <title>The complete nucleotide sequence of wild rice (Oryza nivara) chloroplast genome: first genome wide comparative sequence analysis of wild and cultivated rice.</title>
        <authorList>
            <person name="Masood M.S."/>
            <person name="Nishikawa T."/>
            <person name="Fukuoka S."/>
            <person name="Njenga P.K."/>
            <person name="Tsudzuki T."/>
            <person name="Kadowaki K."/>
        </authorList>
    </citation>
    <scope>NUCLEOTIDE SEQUENCE [LARGE SCALE GENOMIC DNA]</scope>
    <source>
        <strain evidence="3">cv. SL10</strain>
    </source>
</reference>
<feature type="chain" id="PRO_0000123314" description="Small ribosomal subunit protein uS11c">
    <location>
        <begin position="1"/>
        <end position="143"/>
    </location>
</feature>
<proteinExistence type="inferred from homology"/>